<evidence type="ECO:0000250" key="1">
    <source>
        <dbReference type="UniProtKB" id="Q28728"/>
    </source>
</evidence>
<evidence type="ECO:0000250" key="2">
    <source>
        <dbReference type="UniProtKB" id="Q8WWX8"/>
    </source>
</evidence>
<evidence type="ECO:0000250" key="3">
    <source>
        <dbReference type="UniProtKB" id="Q9Z1F2"/>
    </source>
</evidence>
<evidence type="ECO:0000255" key="4"/>
<evidence type="ECO:0000269" key="5">
    <source>
    </source>
</evidence>
<evidence type="ECO:0000269" key="6">
    <source ref="1"/>
</evidence>
<evidence type="ECO:0000303" key="7">
    <source ref="1"/>
</evidence>
<evidence type="ECO:0000305" key="8"/>
<evidence type="ECO:0000312" key="9">
    <source>
        <dbReference type="EMBL" id="AAH31742.1"/>
    </source>
</evidence>
<evidence type="ECO:0000312" key="10">
    <source>
        <dbReference type="EMBL" id="AAQ08402.1"/>
    </source>
</evidence>
<name>SC5AB_MOUSE</name>
<protein>
    <recommendedName>
        <fullName>Sodium/myo-inositol cotransporter 2</fullName>
        <shortName>Na(+)/myo-inositol cotransporter 2</shortName>
    </recommendedName>
    <alternativeName>
        <fullName>Sodium-dependent glucose cotransporter</fullName>
    </alternativeName>
    <alternativeName>
        <fullName>Sodium/glucose cotransporter KST1</fullName>
    </alternativeName>
    <alternativeName>
        <fullName>Sodium/myo-inositol transporter 2</fullName>
        <shortName>SMIT2</shortName>
    </alternativeName>
    <alternativeName>
        <fullName>Solute carrier family 5 member 11</fullName>
    </alternativeName>
</protein>
<comment type="function">
    <text evidence="1 2">Involved in the sodium-dependent cotransport of myo-inositol (MI) with a Na(+):MI stoichiometry of 2:1. Exclusively responsible for apical MI transport and absorption in intestine. Can also transport D-chiro-inositol (DCI) but not L-fucose (By similarity). Exhibits stereospecific cotransport of both D-glucose and D-xylose (By similarity). May induce apoptosis through the TNF-alpha, PDCD1 pathway (By similarity). May play a role in the regulation of MI concentration in serum, involving reabsorption in at least the proximal tubule of the kidney (By similarity).</text>
</comment>
<comment type="catalytic activity">
    <reaction evidence="2">
        <text>myo-inositol(out) + 2 Na(+)(out) = myo-inositol(in) + 2 Na(+)(in)</text>
        <dbReference type="Rhea" id="RHEA:72987"/>
        <dbReference type="ChEBI" id="CHEBI:17268"/>
        <dbReference type="ChEBI" id="CHEBI:29101"/>
    </reaction>
</comment>
<comment type="catalytic activity">
    <reaction evidence="2">
        <text>1D-chiro-inositol(out) + 2 Na(+)(out) = 1D-chiro-inositol(in) + 2 Na(+)(in)</text>
        <dbReference type="Rhea" id="RHEA:73315"/>
        <dbReference type="ChEBI" id="CHEBI:27372"/>
        <dbReference type="ChEBI" id="CHEBI:29101"/>
    </reaction>
</comment>
<comment type="catalytic activity">
    <reaction evidence="1">
        <text>D-glucose(out) + 2 Na(+)(out) = D-glucose(in) + 2 Na(+)(in)</text>
        <dbReference type="Rhea" id="RHEA:70495"/>
        <dbReference type="ChEBI" id="CHEBI:4167"/>
        <dbReference type="ChEBI" id="CHEBI:29101"/>
    </reaction>
</comment>
<comment type="catalytic activity">
    <reaction evidence="1">
        <text>D-xylose(out) + 2 Na(+)(out) = D-xylose(in) + 2 Na(+)(in)</text>
        <dbReference type="Rhea" id="RHEA:73367"/>
        <dbReference type="ChEBI" id="CHEBI:29101"/>
        <dbReference type="ChEBI" id="CHEBI:53455"/>
    </reaction>
</comment>
<comment type="activity regulation">
    <text evidence="2 3">MI transport activity inhibited by D-chiro-inositol (DCI), phlorizin (Pz) and sodium (Na(+)) (By similarity). Insulin increases D-chiro-inositol uptake (By similarity).</text>
</comment>
<comment type="subcellular location">
    <subcellularLocation>
        <location evidence="3">Membrane</location>
        <topology evidence="3">Multi-pass membrane protein</topology>
    </subcellularLocation>
    <subcellularLocation>
        <location evidence="3">Apical cell membrane</location>
        <topology evidence="3">Multi-pass membrane protein</topology>
    </subcellularLocation>
    <text evidence="1 3">Located on apical membrane of enterocytes (By similarity). Located on membrane of kidney brush border membrane vesicles (BBMVs) and apical membrane of proximal convoluted tubules (By similarity).</text>
</comment>
<comment type="alternative products">
    <event type="alternative splicing"/>
    <isoform>
        <id>Q8K0E3-1</id>
        <name evidence="5">1</name>
        <sequence type="displayed"/>
    </isoform>
    <isoform>
        <id>Q8K0E3-2</id>
        <name evidence="6">2</name>
        <sequence type="described" ref="VSP_052788"/>
    </isoform>
</comment>
<comment type="similarity">
    <text evidence="4">Belongs to the sodium:solute symporter (SSF) (TC 2.A.21) family.</text>
</comment>
<comment type="sequence caution" evidence="8">
    <conflict type="frameshift">
        <sequence resource="EMBL-CDS" id="AAQ08402"/>
    </conflict>
</comment>
<dbReference type="EMBL" id="AF518726">
    <property type="protein sequence ID" value="AAQ08402.1"/>
    <property type="status" value="ALT_FRAME"/>
    <property type="molecule type" value="mRNA"/>
</dbReference>
<dbReference type="EMBL" id="BC031742">
    <property type="protein sequence ID" value="AAH31742.1"/>
    <property type="molecule type" value="mRNA"/>
</dbReference>
<dbReference type="CCDS" id="CCDS21819.1">
    <molecule id="Q8K0E3-1"/>
</dbReference>
<dbReference type="RefSeq" id="NP_666310.1">
    <molecule id="Q8K0E3-1"/>
    <property type="nucleotide sequence ID" value="NM_146198.2"/>
</dbReference>
<dbReference type="RefSeq" id="XP_006507775.1">
    <molecule id="Q8K0E3-1"/>
    <property type="nucleotide sequence ID" value="XM_006507712.4"/>
</dbReference>
<dbReference type="RefSeq" id="XP_011240068.1">
    <molecule id="Q8K0E3-1"/>
    <property type="nucleotide sequence ID" value="XM_011241766.3"/>
</dbReference>
<dbReference type="RefSeq" id="XP_011240069.1">
    <molecule id="Q8K0E3-1"/>
    <property type="nucleotide sequence ID" value="XM_011241767.4"/>
</dbReference>
<dbReference type="RefSeq" id="XP_011240070.1">
    <molecule id="Q8K0E3-1"/>
    <property type="nucleotide sequence ID" value="XM_011241768.3"/>
</dbReference>
<dbReference type="SMR" id="Q8K0E3"/>
<dbReference type="FunCoup" id="Q8K0E3">
    <property type="interactions" value="90"/>
</dbReference>
<dbReference type="STRING" id="10090.ENSMUSP00000033035"/>
<dbReference type="PhosphoSitePlus" id="Q8K0E3"/>
<dbReference type="SwissPalm" id="Q8K0E3"/>
<dbReference type="jPOST" id="Q8K0E3"/>
<dbReference type="PaxDb" id="10090-ENSMUSP00000033035"/>
<dbReference type="ProteomicsDB" id="255470">
    <molecule id="Q8K0E3-1"/>
</dbReference>
<dbReference type="ProteomicsDB" id="255471">
    <molecule id="Q8K0E3-2"/>
</dbReference>
<dbReference type="Antibodypedia" id="12746">
    <property type="antibodies" value="130 antibodies from 27 providers"/>
</dbReference>
<dbReference type="DNASU" id="233836"/>
<dbReference type="Ensembl" id="ENSMUST00000033035.13">
    <molecule id="Q8K0E3-1"/>
    <property type="protein sequence ID" value="ENSMUSP00000033035.7"/>
    <property type="gene ID" value="ENSMUSG00000030769.16"/>
</dbReference>
<dbReference type="Ensembl" id="ENSMUST00000167299.9">
    <molecule id="Q8K0E3-1"/>
    <property type="protein sequence ID" value="ENSMUSP00000127977.3"/>
    <property type="gene ID" value="ENSMUSG00000030769.16"/>
</dbReference>
<dbReference type="GeneID" id="233836"/>
<dbReference type="KEGG" id="mmu:233836"/>
<dbReference type="UCSC" id="uc009jpg.1">
    <molecule id="Q8K0E3-1"/>
    <property type="organism name" value="mouse"/>
</dbReference>
<dbReference type="AGR" id="MGI:1919316"/>
<dbReference type="CTD" id="115584"/>
<dbReference type="MGI" id="MGI:1919316">
    <property type="gene designation" value="Slc5a11"/>
</dbReference>
<dbReference type="VEuPathDB" id="HostDB:ENSMUSG00000030769"/>
<dbReference type="eggNOG" id="KOG2349">
    <property type="taxonomic scope" value="Eukaryota"/>
</dbReference>
<dbReference type="GeneTree" id="ENSGT00940000157690"/>
<dbReference type="HOGENOM" id="CLU_018808_9_2_1"/>
<dbReference type="InParanoid" id="Q8K0E3"/>
<dbReference type="OMA" id="NWVFVAK"/>
<dbReference type="OrthoDB" id="6132759at2759"/>
<dbReference type="PhylomeDB" id="Q8K0E3"/>
<dbReference type="TreeFam" id="TF352855"/>
<dbReference type="Reactome" id="R-MMU-429593">
    <property type="pathway name" value="Inositol transporters"/>
</dbReference>
<dbReference type="BioGRID-ORCS" id="233836">
    <property type="hits" value="5 hits in 76 CRISPR screens"/>
</dbReference>
<dbReference type="ChiTaRS" id="Slc5a11">
    <property type="organism name" value="mouse"/>
</dbReference>
<dbReference type="PRO" id="PR:Q8K0E3"/>
<dbReference type="Proteomes" id="UP000000589">
    <property type="component" value="Chromosome 7"/>
</dbReference>
<dbReference type="RNAct" id="Q8K0E3">
    <property type="molecule type" value="protein"/>
</dbReference>
<dbReference type="Bgee" id="ENSMUSG00000030769">
    <property type="expression patterns" value="Expressed in small intestine Peyer's patch and 53 other cell types or tissues"/>
</dbReference>
<dbReference type="ExpressionAtlas" id="Q8K0E3">
    <property type="expression patterns" value="baseline and differential"/>
</dbReference>
<dbReference type="GO" id="GO:0016324">
    <property type="term" value="C:apical plasma membrane"/>
    <property type="evidence" value="ECO:0007669"/>
    <property type="project" value="UniProtKB-SubCell"/>
</dbReference>
<dbReference type="GO" id="GO:0005886">
    <property type="term" value="C:plasma membrane"/>
    <property type="evidence" value="ECO:0000250"/>
    <property type="project" value="UniProtKB"/>
</dbReference>
<dbReference type="GO" id="GO:0005365">
    <property type="term" value="F:myo-inositol transmembrane transporter activity"/>
    <property type="evidence" value="ECO:0000250"/>
    <property type="project" value="UniProtKB"/>
</dbReference>
<dbReference type="GO" id="GO:0015293">
    <property type="term" value="F:symporter activity"/>
    <property type="evidence" value="ECO:0007669"/>
    <property type="project" value="UniProtKB-KW"/>
</dbReference>
<dbReference type="GO" id="GO:0006915">
    <property type="term" value="P:apoptotic process"/>
    <property type="evidence" value="ECO:0007669"/>
    <property type="project" value="UniProtKB-KW"/>
</dbReference>
<dbReference type="GO" id="GO:0015798">
    <property type="term" value="P:myo-inositol transport"/>
    <property type="evidence" value="ECO:0000250"/>
    <property type="project" value="UniProtKB"/>
</dbReference>
<dbReference type="GO" id="GO:0006814">
    <property type="term" value="P:sodium ion transport"/>
    <property type="evidence" value="ECO:0007669"/>
    <property type="project" value="UniProtKB-KW"/>
</dbReference>
<dbReference type="FunFam" id="1.20.1730.10:FF:000012">
    <property type="entry name" value="sodium/myo-inositol cotransporter 2 isoform X1"/>
    <property type="match status" value="1"/>
</dbReference>
<dbReference type="Gene3D" id="1.20.1730.10">
    <property type="entry name" value="Sodium/glucose cotransporter"/>
    <property type="match status" value="1"/>
</dbReference>
<dbReference type="InterPro" id="IPR038377">
    <property type="entry name" value="Na/Glc_symporter_sf"/>
</dbReference>
<dbReference type="InterPro" id="IPR001734">
    <property type="entry name" value="Na/solute_symporter"/>
</dbReference>
<dbReference type="NCBIfam" id="TIGR00813">
    <property type="entry name" value="sss"/>
    <property type="match status" value="1"/>
</dbReference>
<dbReference type="PANTHER" id="PTHR11819:SF171">
    <property type="entry name" value="SODIUM_MYO-INOSITOL COTRANSPORTER 2"/>
    <property type="match status" value="1"/>
</dbReference>
<dbReference type="PANTHER" id="PTHR11819">
    <property type="entry name" value="SOLUTE CARRIER FAMILY 5"/>
    <property type="match status" value="1"/>
</dbReference>
<dbReference type="Pfam" id="PF00474">
    <property type="entry name" value="SSF"/>
    <property type="match status" value="1"/>
</dbReference>
<dbReference type="PROSITE" id="PS50283">
    <property type="entry name" value="NA_SOLUT_SYMP_3"/>
    <property type="match status" value="1"/>
</dbReference>
<organism>
    <name type="scientific">Mus musculus</name>
    <name type="common">Mouse</name>
    <dbReference type="NCBI Taxonomy" id="10090"/>
    <lineage>
        <taxon>Eukaryota</taxon>
        <taxon>Metazoa</taxon>
        <taxon>Chordata</taxon>
        <taxon>Craniata</taxon>
        <taxon>Vertebrata</taxon>
        <taxon>Euteleostomi</taxon>
        <taxon>Mammalia</taxon>
        <taxon>Eutheria</taxon>
        <taxon>Euarchontoglires</taxon>
        <taxon>Glires</taxon>
        <taxon>Rodentia</taxon>
        <taxon>Myomorpha</taxon>
        <taxon>Muroidea</taxon>
        <taxon>Muridae</taxon>
        <taxon>Murinae</taxon>
        <taxon>Mus</taxon>
        <taxon>Mus</taxon>
    </lineage>
</organism>
<proteinExistence type="evidence at protein level"/>
<accession>Q8K0E3</accession>
<accession>Q6EZ51</accession>
<sequence length="673" mass="73798">MESATISPQPPQSDSLEAFPQKSMEPADIAVLVLYFLFVLAVGLWSTVRTKRDTVKGYFLAGGDMVWWPVGASLFASNVGSGHFIGLAGSGAAVGISVAAYELNGLFSVLMLAWVFLPIYIAGQVTTMPEYLRRRFGGNRISITLAVLYLFIYIFTKISVDMYAGAIFIQQSLHLDLYLAIVGLLAITALYTVAGGLAAVIYTDALQTVIMLIGAFILMGYSFAAVGGMEGLKDQYFLALASNRSENSSCGLPREDAFHIFRDPLTSDLPWPGILFGMSIPSLWYWCTDQVIVQRSLAAKNLSHAKGGSLMAAYLKVLPLFLMVFPGMVSRVLFPDQVACAHPDICQRVCSNPSGCSDIAYPKLVLELLPTGLRGLMMAVMVAALMSSLTSIFNSASTIFTMDLWNHIRPRASERELMIVGRIFVFALVLVSILWIPIVQASQGGQLFIYIQSISSYLQPPVAMVFIMGCFWKRTNEKGAFSGLILGLLLGLVRLILDFVYAQPRCDQPDDRPAVVKDVHYLYFSMILSFTTLITVVTVSWFTETPSKEMVSRLTWFTRHEPVAQKDSAPPETPLSLTLSQNGTTEAPGTSIQLETVQESTTKACGDGVSPRHSKVVRAILWLCGMEKNKEEPPSKAEPVIVSLEENPLVKTLLDVNCIVCISCAIFLWGYFA</sequence>
<keyword id="KW-0025">Alternative splicing</keyword>
<keyword id="KW-0053">Apoptosis</keyword>
<keyword id="KW-1003">Cell membrane</keyword>
<keyword id="KW-0406">Ion transport</keyword>
<keyword id="KW-0472">Membrane</keyword>
<keyword id="KW-1185">Reference proteome</keyword>
<keyword id="KW-0915">Sodium</keyword>
<keyword id="KW-0739">Sodium transport</keyword>
<keyword id="KW-0762">Sugar transport</keyword>
<keyword id="KW-0769">Symport</keyword>
<keyword id="KW-0812">Transmembrane</keyword>
<keyword id="KW-1133">Transmembrane helix</keyword>
<keyword id="KW-0813">Transport</keyword>
<gene>
    <name evidence="9" type="primary">Slc5a11</name>
    <name evidence="7" type="synonym">Kst1</name>
    <name evidence="1" type="synonym">Smit2</name>
</gene>
<reference evidence="8 10" key="1">
    <citation type="submission" date="2002-06" db="EMBL/GenBank/DDBJ databases">
        <title>Sequence of the murine KST1 sodium-solute cotransporter, alternatively spliced isoform.</title>
        <authorList>
            <person name="Mount D.B."/>
            <person name="Mercado A."/>
        </authorList>
    </citation>
    <scope>NUCLEOTIDE SEQUENCE [MRNA] (ISOFORM 2)</scope>
    <source>
        <strain evidence="10">C57BL/6J</strain>
    </source>
</reference>
<reference evidence="8 9" key="2">
    <citation type="journal article" date="2004" name="Genome Res.">
        <title>The status, quality, and expansion of the NIH full-length cDNA project: the Mammalian Gene Collection (MGC).</title>
        <authorList>
            <consortium name="The MGC Project Team"/>
        </authorList>
    </citation>
    <scope>NUCLEOTIDE SEQUENCE [LARGE SCALE MRNA] (ISOFORM 1)</scope>
    <source>
        <strain evidence="9">FVB/N</strain>
        <tissue evidence="9">Kidney</tissue>
    </source>
</reference>
<reference key="3">
    <citation type="journal article" date="2010" name="Cell">
        <title>A tissue-specific atlas of mouse protein phosphorylation and expression.</title>
        <authorList>
            <person name="Huttlin E.L."/>
            <person name="Jedrychowski M.P."/>
            <person name="Elias J.E."/>
            <person name="Goswami T."/>
            <person name="Rad R."/>
            <person name="Beausoleil S.A."/>
            <person name="Villen J."/>
            <person name="Haas W."/>
            <person name="Sowa M.E."/>
            <person name="Gygi S.P."/>
        </authorList>
    </citation>
    <scope>IDENTIFICATION BY MASS SPECTROMETRY [LARGE SCALE ANALYSIS]</scope>
    <source>
        <tissue>Kidney</tissue>
    </source>
</reference>
<feature type="chain" id="PRO_0000331569" description="Sodium/myo-inositol cotransporter 2">
    <location>
        <begin position="1"/>
        <end position="673"/>
    </location>
</feature>
<feature type="topological domain" description="Extracellular" evidence="4">
    <location>
        <begin position="1"/>
        <end position="27"/>
    </location>
</feature>
<feature type="transmembrane region" description="Helical" evidence="4">
    <location>
        <begin position="28"/>
        <end position="48"/>
    </location>
</feature>
<feature type="topological domain" description="Cytoplasmic" evidence="4">
    <location>
        <begin position="49"/>
        <end position="65"/>
    </location>
</feature>
<feature type="transmembrane region" description="Helical" evidence="4">
    <location>
        <begin position="66"/>
        <end position="88"/>
    </location>
</feature>
<feature type="topological domain" description="Extracellular" evidence="4">
    <location>
        <begin position="89"/>
        <end position="102"/>
    </location>
</feature>
<feature type="transmembrane region" description="Helical" evidence="4">
    <location>
        <begin position="103"/>
        <end position="123"/>
    </location>
</feature>
<feature type="topological domain" description="Cytoplasmic" evidence="4">
    <location>
        <begin position="124"/>
        <end position="148"/>
    </location>
</feature>
<feature type="transmembrane region" description="Helical" evidence="4">
    <location>
        <begin position="149"/>
        <end position="169"/>
    </location>
</feature>
<feature type="topological domain" description="Extracellular" evidence="4">
    <location>
        <begin position="170"/>
        <end position="180"/>
    </location>
</feature>
<feature type="transmembrane region" description="Helical" evidence="4">
    <location>
        <begin position="181"/>
        <end position="201"/>
    </location>
</feature>
<feature type="topological domain" description="Cytoplasmic" evidence="4">
    <location>
        <begin position="202"/>
        <end position="208"/>
    </location>
</feature>
<feature type="transmembrane region" description="Helical" evidence="4">
    <location>
        <begin position="209"/>
        <end position="229"/>
    </location>
</feature>
<feature type="topological domain" description="Extracellular" evidence="4">
    <location>
        <begin position="230"/>
        <end position="272"/>
    </location>
</feature>
<feature type="transmembrane region" description="Helical" evidence="4">
    <location>
        <begin position="273"/>
        <end position="293"/>
    </location>
</feature>
<feature type="topological domain" description="Cytoplasmic" evidence="4">
    <location>
        <begin position="294"/>
        <end position="308"/>
    </location>
</feature>
<feature type="transmembrane region" description="Helical" evidence="4">
    <location>
        <begin position="309"/>
        <end position="329"/>
    </location>
</feature>
<feature type="topological domain" description="Extracellular" evidence="4">
    <location>
        <begin position="330"/>
        <end position="375"/>
    </location>
</feature>
<feature type="transmembrane region" description="Helical" evidence="4">
    <location>
        <begin position="376"/>
        <end position="396"/>
    </location>
</feature>
<feature type="topological domain" description="Cytoplasmic" evidence="4">
    <location>
        <begin position="397"/>
        <end position="418"/>
    </location>
</feature>
<feature type="transmembrane region" description="Helical" evidence="4">
    <location>
        <begin position="419"/>
        <end position="439"/>
    </location>
</feature>
<feature type="topological domain" description="Extracellular" evidence="4">
    <location>
        <begin position="440"/>
        <end position="446"/>
    </location>
</feature>
<feature type="transmembrane region" description="Helical" evidence="4">
    <location>
        <begin position="447"/>
        <end position="467"/>
    </location>
</feature>
<feature type="topological domain" description="Cytoplasmic" evidence="4">
    <location>
        <begin position="468"/>
        <end position="479"/>
    </location>
</feature>
<feature type="transmembrane region" description="Helical" evidence="4">
    <location>
        <begin position="480"/>
        <end position="500"/>
    </location>
</feature>
<feature type="topological domain" description="Extracellular" evidence="4">
    <location>
        <begin position="501"/>
        <end position="521"/>
    </location>
</feature>
<feature type="transmembrane region" description="Helical" evidence="4">
    <location>
        <begin position="522"/>
        <end position="542"/>
    </location>
</feature>
<feature type="topological domain" description="Cytoplasmic" evidence="4">
    <location>
        <begin position="543"/>
        <end position="652"/>
    </location>
</feature>
<feature type="transmembrane region" description="Helical" evidence="4">
    <location>
        <begin position="653"/>
        <end position="673"/>
    </location>
</feature>
<feature type="splice variant" id="VSP_052788" description="In isoform 2." evidence="7">
    <location>
        <begin position="403"/>
        <end position="626"/>
    </location>
</feature>
<feature type="sequence conflict" description="In Ref. 1; AAQ08402." evidence="8" ref="1">
    <original>K</original>
    <variation>EG</variation>
    <location>
        <position position="22"/>
    </location>
</feature>
<feature type="sequence conflict" description="In Ref. 1; AAQ08402." evidence="8" ref="1">
    <original>N</original>
    <variation>S</variation>
    <location>
        <position position="247"/>
    </location>
</feature>
<feature type="sequence conflict" description="In Ref. 1; AAQ08402." evidence="8" ref="1">
    <original>I</original>
    <variation>V</variation>
    <location>
        <position position="359"/>
    </location>
</feature>